<keyword id="KW-0156">Chromatin regulator</keyword>
<keyword id="KW-0227">DNA damage</keyword>
<keyword id="KW-0539">Nucleus</keyword>
<keyword id="KW-1185">Reference proteome</keyword>
<keyword id="KW-0804">Transcription</keyword>
<keyword id="KW-0805">Transcription regulation</keyword>
<feature type="chain" id="PRO_0000238606" description="Transcription initiation factor TFIID subunit 14">
    <location>
        <begin position="1"/>
        <end position="241"/>
    </location>
</feature>
<feature type="domain" description="YEATS" evidence="1">
    <location>
        <begin position="1"/>
        <end position="137"/>
    </location>
</feature>
<feature type="region of interest" description="Disordered" evidence="2">
    <location>
        <begin position="141"/>
        <end position="169"/>
    </location>
</feature>
<feature type="compositionally biased region" description="Basic and acidic residues" evidence="2">
    <location>
        <begin position="149"/>
        <end position="159"/>
    </location>
</feature>
<organism>
    <name type="scientific">Schizosaccharomyces pombe (strain 972 / ATCC 24843)</name>
    <name type="common">Fission yeast</name>
    <dbReference type="NCBI Taxonomy" id="284812"/>
    <lineage>
        <taxon>Eukaryota</taxon>
        <taxon>Fungi</taxon>
        <taxon>Dikarya</taxon>
        <taxon>Ascomycota</taxon>
        <taxon>Taphrinomycotina</taxon>
        <taxon>Schizosaccharomycetes</taxon>
        <taxon>Schizosaccharomycetales</taxon>
        <taxon>Schizosaccharomycetaceae</taxon>
        <taxon>Schizosaccharomyces</taxon>
    </lineage>
</organism>
<gene>
    <name type="primary">tfg3</name>
    <name type="synonym">taf14</name>
    <name type="ORF">SPAC22H12.02</name>
</gene>
<sequence length="241" mass="27638">MTTVKRTVRLITDQNVLPGGEAAVLNDQSFPVREWSIKLVCLNPQGEETDASFVDRVTYKLHPTFQNPTRTIRKPPFQIKEQGWGEFEMEIIIYYADKGGEHRFLHYLHFQQEHYHEDIELNINATRPGLLKALTATGEVPGYSDEGEEARKDKRKNESEVGAGKKKAKAKPVDMDKLAEGLQKLQEDDLLQVVQMVNENKTPDMYVRNDIEGGEFHIDLYTLPDNLLLLLYSFCAKRVTM</sequence>
<evidence type="ECO:0000255" key="1">
    <source>
        <dbReference type="PROSITE-ProRule" id="PRU00376"/>
    </source>
</evidence>
<evidence type="ECO:0000256" key="2">
    <source>
        <dbReference type="SAM" id="MobiDB-lite"/>
    </source>
</evidence>
<evidence type="ECO:0000269" key="3">
    <source>
    </source>
</evidence>
<evidence type="ECO:0000269" key="4">
    <source>
    </source>
</evidence>
<evidence type="ECO:0000269" key="5">
    <source>
    </source>
</evidence>
<evidence type="ECO:0000269" key="6">
    <source>
    </source>
</evidence>
<evidence type="ECO:0000305" key="7"/>
<reference key="1">
    <citation type="journal article" date="2002" name="Nature">
        <title>The genome sequence of Schizosaccharomyces pombe.</title>
        <authorList>
            <person name="Wood V."/>
            <person name="Gwilliam R."/>
            <person name="Rajandream M.A."/>
            <person name="Lyne M.H."/>
            <person name="Lyne R."/>
            <person name="Stewart A."/>
            <person name="Sgouros J.G."/>
            <person name="Peat N."/>
            <person name="Hayles J."/>
            <person name="Baker S.G."/>
            <person name="Basham D."/>
            <person name="Bowman S."/>
            <person name="Brooks K."/>
            <person name="Brown D."/>
            <person name="Brown S."/>
            <person name="Chillingworth T."/>
            <person name="Churcher C.M."/>
            <person name="Collins M."/>
            <person name="Connor R."/>
            <person name="Cronin A."/>
            <person name="Davis P."/>
            <person name="Feltwell T."/>
            <person name="Fraser A."/>
            <person name="Gentles S."/>
            <person name="Goble A."/>
            <person name="Hamlin N."/>
            <person name="Harris D.E."/>
            <person name="Hidalgo J."/>
            <person name="Hodgson G."/>
            <person name="Holroyd S."/>
            <person name="Hornsby T."/>
            <person name="Howarth S."/>
            <person name="Huckle E.J."/>
            <person name="Hunt S."/>
            <person name="Jagels K."/>
            <person name="James K.D."/>
            <person name="Jones L."/>
            <person name="Jones M."/>
            <person name="Leather S."/>
            <person name="McDonald S."/>
            <person name="McLean J."/>
            <person name="Mooney P."/>
            <person name="Moule S."/>
            <person name="Mungall K.L."/>
            <person name="Murphy L.D."/>
            <person name="Niblett D."/>
            <person name="Odell C."/>
            <person name="Oliver K."/>
            <person name="O'Neil S."/>
            <person name="Pearson D."/>
            <person name="Quail M.A."/>
            <person name="Rabbinowitsch E."/>
            <person name="Rutherford K.M."/>
            <person name="Rutter S."/>
            <person name="Saunders D."/>
            <person name="Seeger K."/>
            <person name="Sharp S."/>
            <person name="Skelton J."/>
            <person name="Simmonds M.N."/>
            <person name="Squares R."/>
            <person name="Squares S."/>
            <person name="Stevens K."/>
            <person name="Taylor K."/>
            <person name="Taylor R.G."/>
            <person name="Tivey A."/>
            <person name="Walsh S.V."/>
            <person name="Warren T."/>
            <person name="Whitehead S."/>
            <person name="Woodward J.R."/>
            <person name="Volckaert G."/>
            <person name="Aert R."/>
            <person name="Robben J."/>
            <person name="Grymonprez B."/>
            <person name="Weltjens I."/>
            <person name="Vanstreels E."/>
            <person name="Rieger M."/>
            <person name="Schaefer M."/>
            <person name="Mueller-Auer S."/>
            <person name="Gabel C."/>
            <person name="Fuchs M."/>
            <person name="Duesterhoeft A."/>
            <person name="Fritzc C."/>
            <person name="Holzer E."/>
            <person name="Moestl D."/>
            <person name="Hilbert H."/>
            <person name="Borzym K."/>
            <person name="Langer I."/>
            <person name="Beck A."/>
            <person name="Lehrach H."/>
            <person name="Reinhardt R."/>
            <person name="Pohl T.M."/>
            <person name="Eger P."/>
            <person name="Zimmermann W."/>
            <person name="Wedler H."/>
            <person name="Wambutt R."/>
            <person name="Purnelle B."/>
            <person name="Goffeau A."/>
            <person name="Cadieu E."/>
            <person name="Dreano S."/>
            <person name="Gloux S."/>
            <person name="Lelaure V."/>
            <person name="Mottier S."/>
            <person name="Galibert F."/>
            <person name="Aves S.J."/>
            <person name="Xiang Z."/>
            <person name="Hunt C."/>
            <person name="Moore K."/>
            <person name="Hurst S.M."/>
            <person name="Lucas M."/>
            <person name="Rochet M."/>
            <person name="Gaillardin C."/>
            <person name="Tallada V.A."/>
            <person name="Garzon A."/>
            <person name="Thode G."/>
            <person name="Daga R.R."/>
            <person name="Cruzado L."/>
            <person name="Jimenez J."/>
            <person name="Sanchez M."/>
            <person name="del Rey F."/>
            <person name="Benito J."/>
            <person name="Dominguez A."/>
            <person name="Revuelta J.L."/>
            <person name="Moreno S."/>
            <person name="Armstrong J."/>
            <person name="Forsburg S.L."/>
            <person name="Cerutti L."/>
            <person name="Lowe T."/>
            <person name="McCombie W.R."/>
            <person name="Paulsen I."/>
            <person name="Potashkin J."/>
            <person name="Shpakovski G.V."/>
            <person name="Ussery D."/>
            <person name="Barrell B.G."/>
            <person name="Nurse P."/>
        </authorList>
    </citation>
    <scope>NUCLEOTIDE SEQUENCE [LARGE SCALE GENOMIC DNA]</scope>
    <source>
        <strain>972 / ATCC 24843</strain>
    </source>
</reference>
<reference key="2">
    <citation type="journal article" date="2004" name="Nucleic Acids Res.">
        <title>Tfg3, a subunit of the general transcription factor TFIIF in Schizosaccharomyces pombe, functions under stress conditions.</title>
        <authorList>
            <person name="Kimura M."/>
            <person name="Ishihama A."/>
        </authorList>
    </citation>
    <scope>FUNCTION</scope>
    <scope>INTERACTION WITH TFIIF-ALPHA</scope>
    <scope>TFIIF-BETA AND TBP</scope>
    <scope>SUBCELLULAR LOCATION</scope>
</reference>
<reference key="3">
    <citation type="journal article" date="2006" name="Nat. Biotechnol.">
        <title>ORFeome cloning and global analysis of protein localization in the fission yeast Schizosaccharomyces pombe.</title>
        <authorList>
            <person name="Matsuyama A."/>
            <person name="Arai R."/>
            <person name="Yashiroda Y."/>
            <person name="Shirai A."/>
            <person name="Kamata A."/>
            <person name="Sekido S."/>
            <person name="Kobayashi Y."/>
            <person name="Hashimoto A."/>
            <person name="Hamamoto M."/>
            <person name="Hiraoka Y."/>
            <person name="Horinouchi S."/>
            <person name="Yoshida M."/>
        </authorList>
    </citation>
    <scope>SUBCELLULAR LOCATION [LARGE SCALE ANALYSIS]</scope>
</reference>
<reference key="4">
    <citation type="journal article" date="2008" name="Nat. Struct. Mol. Biol.">
        <title>Fission yeast SWI/SNF and RSC complexes show compositional and functional differences from budding yeast.</title>
        <authorList>
            <person name="Monahan B.J."/>
            <person name="Villen J."/>
            <person name="Marguerat S."/>
            <person name="Baehler J."/>
            <person name="Gygi S.P."/>
            <person name="Winston F."/>
        </authorList>
    </citation>
    <scope>IDENTIFICATION IN THE SWI/SNF COMPLEX</scope>
    <scope>FUNCTION OF THE SWI/SNF COMPLEX</scope>
    <scope>IDENTIFICATION BY MASS SPECTROMETRY</scope>
</reference>
<reference key="5">
    <citation type="journal article" date="2012" name="J. Biol. Chem.">
        <title>Histone H3 lysine 14 acetylation is required for activation of a DNA damage checkpoint in fission yeast.</title>
        <authorList>
            <person name="Wang Y."/>
            <person name="Kallgren S.P."/>
            <person name="Reddy B.D."/>
            <person name="Kuntz K."/>
            <person name="Lopez-Maury L."/>
            <person name="Thompson J."/>
            <person name="Watt S."/>
            <person name="Ma C."/>
            <person name="Hou H."/>
            <person name="Shi Y."/>
            <person name="Yates J.R. III"/>
            <person name="Bahler J."/>
            <person name="O'Connell M.J."/>
            <person name="Jia S."/>
        </authorList>
    </citation>
    <scope>IDENTIFICATION BY MASS SPECTROMETRY</scope>
    <scope>IDENTIFICATION IN THE MST2 COMPLEX</scope>
    <scope>FUNCTION</scope>
</reference>
<name>TAF14_SCHPO</name>
<proteinExistence type="evidence at protein level"/>
<comment type="function">
    <text evidence="3 5 6">Functions as a component of the DNA-binding general transcription factor complex TFIID, and the RNA polymerase II associated general transcription factor complex TFIIF. Binding of TFIID to a promoter (with or without TATA element) is the initial step in preinitiation complex (PIC) formation. TFIID plays a key role in the regulation of gene expression by RNA polymerase II through different activities such as transcription activator interaction, core promoter recognition and selectivity, TFIIA and TFIIB interaction, facilitation of DNA opening and initiation of transcription. TFIIF is essential for the initiation of transcription by RNA polymerase II. TFIIF functions include the recruitment of RNA polymerase II to the promoter bound DNA-TBP-TFIIB complex, decreasing the affinity of RNA polymerase II for non-specific DNA, allowing for the subsequent recruitment of TFIIE and TFIIH, and facilitating RNA polymerase II elongation. The TAF14 subunit has stimulatory activity. Component of the SWI/SNF complex, an ATP-dependent chromatin remodeling complex, required for the positive and negative regulation of gene expression of a large number of genes. It changes chromatin structure by altering DNA-histone contacts within a nucleosome, leading eventually to a change in nucleosome position, thus facilitating or repressing binding of gene-specific transcription factors. Component of the mst2 complex which is a highly specific H3 lysine 14 (H3K14) acetyltransferase that functions together with gcn5 to regulate global levels of H3K14 acetylation (H3K14ac), critical for DNA damage checkpoint activation.</text>
</comment>
<comment type="subunit">
    <text evidence="3 5 6">Component of the fcp1/TFIIF/polII complex via interaction of tfg3 with both tfg1/TFIIF-alpha and tfg2/TFIIF-beta subunits. Component of the SWI/SNF global transcription activator complex composed of at least arp9, arp42, snf5, snf22, snf30, sbf59, sol1, ssr1, ssr2, ssr3, ssr4 and tfg3. Also interacts with the TATA-binding protein (TBP). Component of the mst2 complex composed of at least eaf6, mst2, nto1, pdp3, ptf1, ptf2 and tfg3.</text>
</comment>
<comment type="subcellular location">
    <subcellularLocation>
        <location evidence="3 4">Nucleus</location>
        <location evidence="3 4">Nucleoplasm</location>
    </subcellularLocation>
</comment>
<comment type="similarity">
    <text evidence="7">Belongs to the TAF14 family.</text>
</comment>
<accession>O94436</accession>
<dbReference type="EMBL" id="CU329670">
    <property type="protein sequence ID" value="CAA22554.1"/>
    <property type="molecule type" value="Genomic_DNA"/>
</dbReference>
<dbReference type="PIR" id="T38217">
    <property type="entry name" value="T38217"/>
</dbReference>
<dbReference type="RefSeq" id="NP_593114.1">
    <property type="nucleotide sequence ID" value="NM_001018511.2"/>
</dbReference>
<dbReference type="SMR" id="O94436"/>
<dbReference type="BioGRID" id="278223">
    <property type="interactions" value="28"/>
</dbReference>
<dbReference type="ComplexPortal" id="CPX-6362">
    <property type="entry name" value="SWI/SNF chromatin remodelling complex"/>
</dbReference>
<dbReference type="DIP" id="DIP-39996N"/>
<dbReference type="FunCoup" id="O94436">
    <property type="interactions" value="69"/>
</dbReference>
<dbReference type="IntAct" id="O94436">
    <property type="interactions" value="7"/>
</dbReference>
<dbReference type="STRING" id="284812.O94436"/>
<dbReference type="iPTMnet" id="O94436"/>
<dbReference type="PaxDb" id="4896-SPAC22H12.02.1"/>
<dbReference type="EnsemblFungi" id="SPAC22H12.02.1">
    <property type="protein sequence ID" value="SPAC22H12.02.1:pep"/>
    <property type="gene ID" value="SPAC22H12.02"/>
</dbReference>
<dbReference type="GeneID" id="2541729"/>
<dbReference type="KEGG" id="spo:2541729"/>
<dbReference type="PomBase" id="SPAC22H12.02">
    <property type="gene designation" value="tfg3"/>
</dbReference>
<dbReference type="VEuPathDB" id="FungiDB:SPAC22H12.02"/>
<dbReference type="eggNOG" id="KOG3149">
    <property type="taxonomic scope" value="Eukaryota"/>
</dbReference>
<dbReference type="HOGENOM" id="CLU_078004_0_0_1"/>
<dbReference type="InParanoid" id="O94436"/>
<dbReference type="OMA" id="GEFDMTI"/>
<dbReference type="PhylomeDB" id="O94436"/>
<dbReference type="PRO" id="PR:O94436"/>
<dbReference type="Proteomes" id="UP000002485">
    <property type="component" value="Chromosome I"/>
</dbReference>
<dbReference type="GO" id="GO:0000785">
    <property type="term" value="C:chromatin"/>
    <property type="evidence" value="ECO:0000303"/>
    <property type="project" value="ComplexPortal"/>
</dbReference>
<dbReference type="GO" id="GO:0031011">
    <property type="term" value="C:Ino80 complex"/>
    <property type="evidence" value="ECO:0000353"/>
    <property type="project" value="PomBase"/>
</dbReference>
<dbReference type="GO" id="GO:0005654">
    <property type="term" value="C:nucleoplasm"/>
    <property type="evidence" value="ECO:0000314"/>
    <property type="project" value="PomBase"/>
</dbReference>
<dbReference type="GO" id="GO:0005634">
    <property type="term" value="C:nucleus"/>
    <property type="evidence" value="ECO:0000314"/>
    <property type="project" value="PomBase"/>
</dbReference>
<dbReference type="GO" id="GO:0016514">
    <property type="term" value="C:SWI/SNF complex"/>
    <property type="evidence" value="ECO:0000314"/>
    <property type="project" value="PomBase"/>
</dbReference>
<dbReference type="GO" id="GO:0005669">
    <property type="term" value="C:transcription factor TFIID complex"/>
    <property type="evidence" value="ECO:0000314"/>
    <property type="project" value="PomBase"/>
</dbReference>
<dbReference type="GO" id="GO:0005674">
    <property type="term" value="C:transcription factor TFIIF complex"/>
    <property type="evidence" value="ECO:0000314"/>
    <property type="project" value="PomBase"/>
</dbReference>
<dbReference type="GO" id="GO:0042393">
    <property type="term" value="F:histone binding"/>
    <property type="evidence" value="ECO:0000318"/>
    <property type="project" value="GO_Central"/>
</dbReference>
<dbReference type="GO" id="GO:0016251">
    <property type="term" value="F:RNA polymerase II general transcription initiation factor activity"/>
    <property type="evidence" value="ECO:0000269"/>
    <property type="project" value="PomBase"/>
</dbReference>
<dbReference type="GO" id="GO:0006338">
    <property type="term" value="P:chromatin remodeling"/>
    <property type="evidence" value="ECO:0000314"/>
    <property type="project" value="PomBase"/>
</dbReference>
<dbReference type="GO" id="GO:0006974">
    <property type="term" value="P:DNA damage response"/>
    <property type="evidence" value="ECO:0007669"/>
    <property type="project" value="UniProtKB-KW"/>
</dbReference>
<dbReference type="GO" id="GO:0006357">
    <property type="term" value="P:regulation of transcription by RNA polymerase II"/>
    <property type="evidence" value="ECO:0000318"/>
    <property type="project" value="GO_Central"/>
</dbReference>
<dbReference type="GO" id="GO:0006367">
    <property type="term" value="P:transcription initiation at RNA polymerase II promoter"/>
    <property type="evidence" value="ECO:0000269"/>
    <property type="project" value="PomBase"/>
</dbReference>
<dbReference type="GO" id="GO:0045815">
    <property type="term" value="P:transcription initiation-coupled chromatin remodeling"/>
    <property type="evidence" value="ECO:0000305"/>
    <property type="project" value="PomBase"/>
</dbReference>
<dbReference type="CDD" id="cd16905">
    <property type="entry name" value="YEATS_Taf14_like"/>
    <property type="match status" value="1"/>
</dbReference>
<dbReference type="Gene3D" id="1.20.1270.220">
    <property type="match status" value="1"/>
</dbReference>
<dbReference type="Gene3D" id="2.60.40.1970">
    <property type="entry name" value="YEATS domain"/>
    <property type="match status" value="1"/>
</dbReference>
<dbReference type="InterPro" id="IPR027353">
    <property type="entry name" value="NET_dom"/>
</dbReference>
<dbReference type="InterPro" id="IPR038336">
    <property type="entry name" value="NET_sf"/>
</dbReference>
<dbReference type="InterPro" id="IPR016665">
    <property type="entry name" value="Sas5/TAF14"/>
</dbReference>
<dbReference type="InterPro" id="IPR038704">
    <property type="entry name" value="YEAST_sf"/>
</dbReference>
<dbReference type="InterPro" id="IPR005033">
    <property type="entry name" value="YEATS"/>
</dbReference>
<dbReference type="InterPro" id="IPR055129">
    <property type="entry name" value="YEATS_dom"/>
</dbReference>
<dbReference type="PANTHER" id="PTHR23195">
    <property type="entry name" value="YEATS DOMAIN"/>
    <property type="match status" value="1"/>
</dbReference>
<dbReference type="Pfam" id="PF17035">
    <property type="entry name" value="BET"/>
    <property type="match status" value="1"/>
</dbReference>
<dbReference type="Pfam" id="PF03366">
    <property type="entry name" value="YEATS"/>
    <property type="match status" value="1"/>
</dbReference>
<dbReference type="PIRSF" id="PIRSF016551">
    <property type="entry name" value="SAS5/TFIID_14"/>
    <property type="match status" value="1"/>
</dbReference>
<dbReference type="PROSITE" id="PS51037">
    <property type="entry name" value="YEATS"/>
    <property type="match status" value="1"/>
</dbReference>
<protein>
    <recommendedName>
        <fullName>Transcription initiation factor TFIID subunit 14</fullName>
    </recommendedName>
    <alternativeName>
        <fullName>SWI/SNF chromatin-remodeling complex subunit tfg3</fullName>
    </alternativeName>
    <alternativeName>
        <fullName>SWI/SNF complex subunit tfg3</fullName>
    </alternativeName>
    <alternativeName>
        <fullName>TBP-associated factor 14</fullName>
    </alternativeName>
    <alternativeName>
        <fullName>TBP-associated factor 30 kDa</fullName>
    </alternativeName>
    <alternativeName>
        <fullName>Transcription factor G 30 kDa subunit</fullName>
    </alternativeName>
    <alternativeName>
        <fullName>Transcription initiation factor TFIIF 30 kDa subunit</fullName>
    </alternativeName>
</protein>